<feature type="chain" id="PRO_0000198066" description="Small ribosomal subunit protein eS32">
    <location>
        <begin position="1"/>
        <end position="25"/>
    </location>
</feature>
<feature type="region of interest" description="Disordered" evidence="1">
    <location>
        <begin position="1"/>
        <end position="25"/>
    </location>
</feature>
<gene>
    <name type="primary">RPL41</name>
    <name type="ordered locus">Os03g0781501</name>
    <name type="ordered locus">Os03g0781500</name>
    <name type="ordered locus">LOC_Os03g56878</name>
    <name type="ORF">OSJNBa0091J19.8</name>
</gene>
<dbReference type="EMBL" id="AC084320">
    <property type="protein sequence ID" value="AAK09215.1"/>
    <property type="molecule type" value="Genomic_DNA"/>
</dbReference>
<dbReference type="EMBL" id="AP014959">
    <property type="status" value="NOT_ANNOTATED_CDS"/>
    <property type="molecule type" value="Genomic_DNA"/>
</dbReference>
<dbReference type="EMBL" id="AK243070">
    <property type="status" value="NOT_ANNOTATED_CDS"/>
    <property type="molecule type" value="mRNA"/>
</dbReference>
<dbReference type="PDB" id="8IP8">
    <property type="method" value="EM"/>
    <property type="resolution" value="2.90 A"/>
    <property type="chains" value="IB=1-25"/>
</dbReference>
<dbReference type="PDB" id="8IP9">
    <property type="method" value="EM"/>
    <property type="resolution" value="3.00 A"/>
    <property type="chains" value="IB=1-25"/>
</dbReference>
<dbReference type="PDB" id="8IPA">
    <property type="method" value="EM"/>
    <property type="resolution" value="3.40 A"/>
    <property type="chains" value="IB=1-25"/>
</dbReference>
<dbReference type="PDB" id="8IPB">
    <property type="method" value="EM"/>
    <property type="resolution" value="3.40 A"/>
    <property type="chains" value="IB=1-25"/>
</dbReference>
<dbReference type="PDBsum" id="8IP8"/>
<dbReference type="PDBsum" id="8IP9"/>
<dbReference type="PDBsum" id="8IPA"/>
<dbReference type="PDBsum" id="8IPB"/>
<dbReference type="EMDB" id="EMD-35634"/>
<dbReference type="EMDB" id="EMD-35635"/>
<dbReference type="EMDB" id="EMD-35637"/>
<dbReference type="EMDB" id="EMD-35638"/>
<dbReference type="SMR" id="P62125"/>
<dbReference type="FunCoup" id="P62125">
    <property type="interactions" value="2"/>
</dbReference>
<dbReference type="PaxDb" id="39947-P62125"/>
<dbReference type="InParanoid" id="P62125"/>
<dbReference type="Proteomes" id="UP000000763">
    <property type="component" value="Chromosome 3"/>
</dbReference>
<dbReference type="Proteomes" id="UP000059680">
    <property type="component" value="Chromosome 3"/>
</dbReference>
<dbReference type="GO" id="GO:1990904">
    <property type="term" value="C:ribonucleoprotein complex"/>
    <property type="evidence" value="ECO:0007669"/>
    <property type="project" value="UniProtKB-KW"/>
</dbReference>
<dbReference type="GO" id="GO:0005840">
    <property type="term" value="C:ribosome"/>
    <property type="evidence" value="ECO:0007669"/>
    <property type="project" value="UniProtKB-KW"/>
</dbReference>
<dbReference type="GO" id="GO:0003735">
    <property type="term" value="F:structural constituent of ribosome"/>
    <property type="evidence" value="ECO:0007669"/>
    <property type="project" value="InterPro"/>
</dbReference>
<dbReference type="GO" id="GO:0006412">
    <property type="term" value="P:translation"/>
    <property type="evidence" value="ECO:0007669"/>
    <property type="project" value="InterPro"/>
</dbReference>
<dbReference type="InterPro" id="IPR007836">
    <property type="entry name" value="Ribosomal_eS32"/>
</dbReference>
<dbReference type="Pfam" id="PF05162">
    <property type="entry name" value="Ribosomal_L41"/>
    <property type="match status" value="1"/>
</dbReference>
<proteinExistence type="evidence at protein level"/>
<reference key="1">
    <citation type="journal article" date="2005" name="Genome Res.">
        <title>Sequence, annotation, and analysis of synteny between rice chromosome 3 and diverged grass species.</title>
        <authorList>
            <consortium name="The rice chromosome 3 sequencing consortium"/>
            <person name="Buell C.R."/>
            <person name="Yuan Q."/>
            <person name="Ouyang S."/>
            <person name="Liu J."/>
            <person name="Zhu W."/>
            <person name="Wang A."/>
            <person name="Maiti R."/>
            <person name="Haas B."/>
            <person name="Wortman J."/>
            <person name="Pertea M."/>
            <person name="Jones K.M."/>
            <person name="Kim M."/>
            <person name="Overton L."/>
            <person name="Tsitrin T."/>
            <person name="Fadrosh D."/>
            <person name="Bera J."/>
            <person name="Weaver B."/>
            <person name="Jin S."/>
            <person name="Johri S."/>
            <person name="Reardon M."/>
            <person name="Webb K."/>
            <person name="Hill J."/>
            <person name="Moffat K."/>
            <person name="Tallon L."/>
            <person name="Van Aken S."/>
            <person name="Lewis M."/>
            <person name="Utterback T."/>
            <person name="Feldblyum T."/>
            <person name="Zismann V."/>
            <person name="Iobst S."/>
            <person name="Hsiao J."/>
            <person name="de Vazeille A.R."/>
            <person name="Salzberg S.L."/>
            <person name="White O."/>
            <person name="Fraser C.M."/>
            <person name="Yu Y."/>
            <person name="Kim H."/>
            <person name="Rambo T."/>
            <person name="Currie J."/>
            <person name="Collura K."/>
            <person name="Kernodle-Thompson S."/>
            <person name="Wei F."/>
            <person name="Kudrna K."/>
            <person name="Ammiraju J.S.S."/>
            <person name="Luo M."/>
            <person name="Goicoechea J.L."/>
            <person name="Wing R.A."/>
            <person name="Henry D."/>
            <person name="Oates R."/>
            <person name="Palmer M."/>
            <person name="Pries G."/>
            <person name="Saski C."/>
            <person name="Simmons J."/>
            <person name="Soderlund C."/>
            <person name="Nelson W."/>
            <person name="de la Bastide M."/>
            <person name="Spiegel L."/>
            <person name="Nascimento L."/>
            <person name="Huang E."/>
            <person name="Preston R."/>
            <person name="Zutavern T."/>
            <person name="Palmer L."/>
            <person name="O'Shaughnessy A."/>
            <person name="Dike S."/>
            <person name="McCombie W.R."/>
            <person name="Minx P."/>
            <person name="Cordum H."/>
            <person name="Wilson R."/>
            <person name="Jin W."/>
            <person name="Lee H.R."/>
            <person name="Jiang J."/>
            <person name="Jackson S."/>
        </authorList>
    </citation>
    <scope>NUCLEOTIDE SEQUENCE [LARGE SCALE GENOMIC DNA]</scope>
    <source>
        <strain>cv. Nipponbare</strain>
    </source>
</reference>
<reference key="2">
    <citation type="journal article" date="2005" name="Nature">
        <title>The map-based sequence of the rice genome.</title>
        <authorList>
            <consortium name="International rice genome sequencing project (IRGSP)"/>
        </authorList>
    </citation>
    <scope>NUCLEOTIDE SEQUENCE [LARGE SCALE GENOMIC DNA]</scope>
    <source>
        <strain>cv. Nipponbare</strain>
    </source>
</reference>
<reference key="3">
    <citation type="journal article" date="2013" name="Rice">
        <title>Improvement of the Oryza sativa Nipponbare reference genome using next generation sequence and optical map data.</title>
        <authorList>
            <person name="Kawahara Y."/>
            <person name="de la Bastide M."/>
            <person name="Hamilton J.P."/>
            <person name="Kanamori H."/>
            <person name="McCombie W.R."/>
            <person name="Ouyang S."/>
            <person name="Schwartz D.C."/>
            <person name="Tanaka T."/>
            <person name="Wu J."/>
            <person name="Zhou S."/>
            <person name="Childs K.L."/>
            <person name="Davidson R.M."/>
            <person name="Lin H."/>
            <person name="Quesada-Ocampo L."/>
            <person name="Vaillancourt B."/>
            <person name="Sakai H."/>
            <person name="Lee S.S."/>
            <person name="Kim J."/>
            <person name="Numa H."/>
            <person name="Itoh T."/>
            <person name="Buell C.R."/>
            <person name="Matsumoto T."/>
        </authorList>
    </citation>
    <scope>GENOME REANNOTATION</scope>
    <source>
        <strain>cv. Nipponbare</strain>
    </source>
</reference>
<reference key="4">
    <citation type="submission" date="2006-10" db="EMBL/GenBank/DDBJ databases">
        <title>Oryza sativa full length cDNA.</title>
        <authorList>
            <consortium name="The rice full-length cDNA consortium"/>
        </authorList>
    </citation>
    <scope>NUCLEOTIDE SEQUENCE [LARGE SCALE MRNA]</scope>
    <source>
        <strain>cv. Nipponbare</strain>
    </source>
</reference>
<reference key="5">
    <citation type="unpublished observations" date="2023-10">
        <authorList>
            <person name="Leibundgut M.A."/>
            <person name="Ban N."/>
        </authorList>
    </citation>
    <scope>REVISION OF SUBUNIT</scope>
    <scope>NOMENCLATURE</scope>
</reference>
<protein>
    <recommendedName>
        <fullName evidence="3">Small ribosomal subunit protein eS32</fullName>
    </recommendedName>
    <alternativeName>
        <fullName>60S ribosomal protein L41</fullName>
    </alternativeName>
    <alternativeName>
        <fullName evidence="2">Large ribosomal subunit protein eL41</fullName>
    </alternativeName>
</protein>
<sequence>MRAKWKKKRMRRLKRKRRKMRQRSK</sequence>
<name>RS32_ORYSJ</name>
<comment type="subunit">
    <text evidence="3">Component of the small ribosomal subunit (SSU) (Ref.5).</text>
</comment>
<comment type="miscellaneous">
    <text evidence="3">Initially thought to be part of the large ribosomal subunit. Crystal structures show eS32/eL41 to be a small ribosomal subunit forming a bridge at the interface of the 2 subunits.</text>
</comment>
<comment type="similarity">
    <text evidence="2">Belongs to the eukaryotic ribosomal protein eS32 family.</text>
</comment>
<organism>
    <name type="scientific">Oryza sativa subsp. japonica</name>
    <name type="common">Rice</name>
    <dbReference type="NCBI Taxonomy" id="39947"/>
    <lineage>
        <taxon>Eukaryota</taxon>
        <taxon>Viridiplantae</taxon>
        <taxon>Streptophyta</taxon>
        <taxon>Embryophyta</taxon>
        <taxon>Tracheophyta</taxon>
        <taxon>Spermatophyta</taxon>
        <taxon>Magnoliopsida</taxon>
        <taxon>Liliopsida</taxon>
        <taxon>Poales</taxon>
        <taxon>Poaceae</taxon>
        <taxon>BOP clade</taxon>
        <taxon>Oryzoideae</taxon>
        <taxon>Oryzeae</taxon>
        <taxon>Oryzinae</taxon>
        <taxon>Oryza</taxon>
        <taxon>Oryza sativa</taxon>
    </lineage>
</organism>
<evidence type="ECO:0000256" key="1">
    <source>
        <dbReference type="SAM" id="MobiDB-lite"/>
    </source>
</evidence>
<evidence type="ECO:0000305" key="2"/>
<evidence type="ECO:0000305" key="3">
    <source ref="5"/>
</evidence>
<accession>P62125</accession>
<accession>P35015</accession>
<keyword id="KW-0002">3D-structure</keyword>
<keyword id="KW-1185">Reference proteome</keyword>
<keyword id="KW-0687">Ribonucleoprotein</keyword>
<keyword id="KW-0689">Ribosomal protein</keyword>